<comment type="function">
    <text evidence="1">Involved in the targeting and/or fusion of transport vesicles to their target membrane.</text>
</comment>
<comment type="subcellular location">
    <subcellularLocation>
        <location evidence="1">Cytoplasmic vesicle</location>
        <location evidence="1">Secretory vesicle membrane</location>
        <topology evidence="1">Single-pass type IV membrane protein</topology>
    </subcellularLocation>
</comment>
<comment type="similarity">
    <text evidence="4">Belongs to the synaptobrevin family.</text>
</comment>
<accession>Q54GB3</accession>
<feature type="chain" id="PRO_0000327937" description="Synaptobrevin-B">
    <location>
        <begin position="1"/>
        <end position="101"/>
    </location>
</feature>
<feature type="topological domain" description="Cytoplasmic" evidence="2">
    <location>
        <begin position="1"/>
        <end position="76"/>
    </location>
</feature>
<feature type="transmembrane region" description="Helical; Anchor for type IV membrane protein" evidence="2">
    <location>
        <begin position="77"/>
        <end position="97"/>
    </location>
</feature>
<feature type="topological domain" description="Vesicular" evidence="2">
    <location>
        <begin position="98"/>
        <end position="101"/>
    </location>
</feature>
<feature type="domain" description="v-SNARE coiled-coil homology" evidence="3">
    <location>
        <begin position="13"/>
        <end position="73"/>
    </location>
</feature>
<protein>
    <recommendedName>
        <fullName>Synaptobrevin-B</fullName>
    </recommendedName>
</protein>
<name>SYBB_DICDI</name>
<proteinExistence type="inferred from homology"/>
<gene>
    <name type="primary">sybB</name>
    <name type="ORF">DDB_G0290363</name>
</gene>
<dbReference type="EMBL" id="AAFI02000162">
    <property type="protein sequence ID" value="EAL62308.1"/>
    <property type="molecule type" value="Genomic_DNA"/>
</dbReference>
<dbReference type="RefSeq" id="XP_635770.1">
    <property type="nucleotide sequence ID" value="XM_630678.1"/>
</dbReference>
<dbReference type="SMR" id="Q54GB3"/>
<dbReference type="FunCoup" id="Q54GB3">
    <property type="interactions" value="195"/>
</dbReference>
<dbReference type="STRING" id="44689.Q54GB3"/>
<dbReference type="PaxDb" id="44689-DDB0266406"/>
<dbReference type="EnsemblProtists" id="EAL62308">
    <property type="protein sequence ID" value="EAL62308"/>
    <property type="gene ID" value="DDB_G0290363"/>
</dbReference>
<dbReference type="GeneID" id="8627574"/>
<dbReference type="KEGG" id="ddi:DDB_G0290363"/>
<dbReference type="dictyBase" id="DDB_G0290363">
    <property type="gene designation" value="sybB"/>
</dbReference>
<dbReference type="VEuPathDB" id="AmoebaDB:DDB_G0290363"/>
<dbReference type="eggNOG" id="ENOG502RSM0">
    <property type="taxonomic scope" value="Eukaryota"/>
</dbReference>
<dbReference type="HOGENOM" id="CLU_064620_5_0_1"/>
<dbReference type="InParanoid" id="Q54GB3"/>
<dbReference type="OMA" id="NHDKASN"/>
<dbReference type="PhylomeDB" id="Q54GB3"/>
<dbReference type="Reactome" id="R-DDI-199992">
    <property type="pathway name" value="trans-Golgi Network Vesicle Budding"/>
</dbReference>
<dbReference type="Reactome" id="R-DDI-210500">
    <property type="pathway name" value="Glutamate Neurotransmitter Release Cycle"/>
</dbReference>
<dbReference type="Reactome" id="R-DDI-449836">
    <property type="pathway name" value="Other interleukin signaling"/>
</dbReference>
<dbReference type="Reactome" id="R-DDI-6798695">
    <property type="pathway name" value="Neutrophil degranulation"/>
</dbReference>
<dbReference type="Reactome" id="R-DDI-8856825">
    <property type="pathway name" value="Cargo recognition for clathrin-mediated endocytosis"/>
</dbReference>
<dbReference type="Reactome" id="R-DDI-8856828">
    <property type="pathway name" value="Clathrin-mediated endocytosis"/>
</dbReference>
<dbReference type="Reactome" id="R-DDI-9609523">
    <property type="pathway name" value="Insertion of tail-anchored proteins into the endoplasmic reticulum membrane"/>
</dbReference>
<dbReference type="PRO" id="PR:Q54GB3"/>
<dbReference type="Proteomes" id="UP000002195">
    <property type="component" value="Chromosome 5"/>
</dbReference>
<dbReference type="GO" id="GO:0005886">
    <property type="term" value="C:plasma membrane"/>
    <property type="evidence" value="ECO:0000318"/>
    <property type="project" value="GO_Central"/>
</dbReference>
<dbReference type="GO" id="GO:0031201">
    <property type="term" value="C:SNARE complex"/>
    <property type="evidence" value="ECO:0000318"/>
    <property type="project" value="GO_Central"/>
</dbReference>
<dbReference type="GO" id="GO:0030658">
    <property type="term" value="C:transport vesicle membrane"/>
    <property type="evidence" value="ECO:0007669"/>
    <property type="project" value="UniProtKB-SubCell"/>
</dbReference>
<dbReference type="GO" id="GO:0005484">
    <property type="term" value="F:SNAP receptor activity"/>
    <property type="evidence" value="ECO:0000318"/>
    <property type="project" value="GO_Central"/>
</dbReference>
<dbReference type="GO" id="GO:0019905">
    <property type="term" value="F:syntaxin binding"/>
    <property type="evidence" value="ECO:0000318"/>
    <property type="project" value="GO_Central"/>
</dbReference>
<dbReference type="GO" id="GO:0006971">
    <property type="term" value="P:hypotonic response"/>
    <property type="evidence" value="ECO:0007007"/>
    <property type="project" value="dictyBase"/>
</dbReference>
<dbReference type="GO" id="GO:0006906">
    <property type="term" value="P:vesicle fusion"/>
    <property type="evidence" value="ECO:0000318"/>
    <property type="project" value="GO_Central"/>
</dbReference>
<dbReference type="CDD" id="cd15843">
    <property type="entry name" value="R-SNARE"/>
    <property type="match status" value="1"/>
</dbReference>
<dbReference type="Gene3D" id="1.20.5.110">
    <property type="match status" value="1"/>
</dbReference>
<dbReference type="InterPro" id="IPR001388">
    <property type="entry name" value="Synaptobrevin-like"/>
</dbReference>
<dbReference type="InterPro" id="IPR016444">
    <property type="entry name" value="Synaptobrevin/VAMP"/>
</dbReference>
<dbReference type="InterPro" id="IPR042855">
    <property type="entry name" value="V_SNARE_CC"/>
</dbReference>
<dbReference type="PANTHER" id="PTHR45701">
    <property type="entry name" value="SYNAPTOBREVIN FAMILY MEMBER"/>
    <property type="match status" value="1"/>
</dbReference>
<dbReference type="Pfam" id="PF00957">
    <property type="entry name" value="Synaptobrevin"/>
    <property type="match status" value="1"/>
</dbReference>
<dbReference type="PIRSF" id="PIRSF005409">
    <property type="entry name" value="Synaptobrevin_euk"/>
    <property type="match status" value="1"/>
</dbReference>
<dbReference type="PRINTS" id="PR00219">
    <property type="entry name" value="SYNAPTOBREVN"/>
</dbReference>
<dbReference type="SUPFAM" id="SSF58038">
    <property type="entry name" value="SNARE fusion complex"/>
    <property type="match status" value="1"/>
</dbReference>
<dbReference type="PROSITE" id="PS50892">
    <property type="entry name" value="V_SNARE"/>
    <property type="match status" value="1"/>
</dbReference>
<sequence length="101" mass="11499">MSNNPNNSGQPNKTQSILQEVDKVKDVMHNNIGLMLNNHDKASNLQDKTASMSNNARLFKKQTVTIRRQMWCRNMKLQLIIIAVVILVLAVILIPIIMKFV</sequence>
<reference key="1">
    <citation type="journal article" date="2005" name="Nature">
        <title>The genome of the social amoeba Dictyostelium discoideum.</title>
        <authorList>
            <person name="Eichinger L."/>
            <person name="Pachebat J.A."/>
            <person name="Gloeckner G."/>
            <person name="Rajandream M.A."/>
            <person name="Sucgang R."/>
            <person name="Berriman M."/>
            <person name="Song J."/>
            <person name="Olsen R."/>
            <person name="Szafranski K."/>
            <person name="Xu Q."/>
            <person name="Tunggal B."/>
            <person name="Kummerfeld S."/>
            <person name="Madera M."/>
            <person name="Konfortov B.A."/>
            <person name="Rivero F."/>
            <person name="Bankier A.T."/>
            <person name="Lehmann R."/>
            <person name="Hamlin N."/>
            <person name="Davies R."/>
            <person name="Gaudet P."/>
            <person name="Fey P."/>
            <person name="Pilcher K."/>
            <person name="Chen G."/>
            <person name="Saunders D."/>
            <person name="Sodergren E.J."/>
            <person name="Davis P."/>
            <person name="Kerhornou A."/>
            <person name="Nie X."/>
            <person name="Hall N."/>
            <person name="Anjard C."/>
            <person name="Hemphill L."/>
            <person name="Bason N."/>
            <person name="Farbrother P."/>
            <person name="Desany B."/>
            <person name="Just E."/>
            <person name="Morio T."/>
            <person name="Rost R."/>
            <person name="Churcher C.M."/>
            <person name="Cooper J."/>
            <person name="Haydock S."/>
            <person name="van Driessche N."/>
            <person name="Cronin A."/>
            <person name="Goodhead I."/>
            <person name="Muzny D.M."/>
            <person name="Mourier T."/>
            <person name="Pain A."/>
            <person name="Lu M."/>
            <person name="Harper D."/>
            <person name="Lindsay R."/>
            <person name="Hauser H."/>
            <person name="James K.D."/>
            <person name="Quiles M."/>
            <person name="Madan Babu M."/>
            <person name="Saito T."/>
            <person name="Buchrieser C."/>
            <person name="Wardroper A."/>
            <person name="Felder M."/>
            <person name="Thangavelu M."/>
            <person name="Johnson D."/>
            <person name="Knights A."/>
            <person name="Loulseged H."/>
            <person name="Mungall K.L."/>
            <person name="Oliver K."/>
            <person name="Price C."/>
            <person name="Quail M.A."/>
            <person name="Urushihara H."/>
            <person name="Hernandez J."/>
            <person name="Rabbinowitsch E."/>
            <person name="Steffen D."/>
            <person name="Sanders M."/>
            <person name="Ma J."/>
            <person name="Kohara Y."/>
            <person name="Sharp S."/>
            <person name="Simmonds M.N."/>
            <person name="Spiegler S."/>
            <person name="Tivey A."/>
            <person name="Sugano S."/>
            <person name="White B."/>
            <person name="Walker D."/>
            <person name="Woodward J.R."/>
            <person name="Winckler T."/>
            <person name="Tanaka Y."/>
            <person name="Shaulsky G."/>
            <person name="Schleicher M."/>
            <person name="Weinstock G.M."/>
            <person name="Rosenthal A."/>
            <person name="Cox E.C."/>
            <person name="Chisholm R.L."/>
            <person name="Gibbs R.A."/>
            <person name="Loomis W.F."/>
            <person name="Platzer M."/>
            <person name="Kay R.R."/>
            <person name="Williams J.G."/>
            <person name="Dear P.H."/>
            <person name="Noegel A.A."/>
            <person name="Barrell B.G."/>
            <person name="Kuspa A."/>
        </authorList>
    </citation>
    <scope>NUCLEOTIDE SEQUENCE [LARGE SCALE GENOMIC DNA]</scope>
    <source>
        <strain>AX4</strain>
    </source>
</reference>
<keyword id="KW-0175">Coiled coil</keyword>
<keyword id="KW-0968">Cytoplasmic vesicle</keyword>
<keyword id="KW-0472">Membrane</keyword>
<keyword id="KW-1185">Reference proteome</keyword>
<keyword id="KW-0812">Transmembrane</keyword>
<keyword id="KW-1133">Transmembrane helix</keyword>
<organism>
    <name type="scientific">Dictyostelium discoideum</name>
    <name type="common">Social amoeba</name>
    <dbReference type="NCBI Taxonomy" id="44689"/>
    <lineage>
        <taxon>Eukaryota</taxon>
        <taxon>Amoebozoa</taxon>
        <taxon>Evosea</taxon>
        <taxon>Eumycetozoa</taxon>
        <taxon>Dictyostelia</taxon>
        <taxon>Dictyosteliales</taxon>
        <taxon>Dictyosteliaceae</taxon>
        <taxon>Dictyostelium</taxon>
    </lineage>
</organism>
<evidence type="ECO:0000250" key="1"/>
<evidence type="ECO:0000255" key="2"/>
<evidence type="ECO:0000255" key="3">
    <source>
        <dbReference type="PROSITE-ProRule" id="PRU00290"/>
    </source>
</evidence>
<evidence type="ECO:0000305" key="4"/>